<feature type="chain" id="PRO_0000457428" description="mRNA-capping enzyme catalytic subunit">
    <location>
        <begin position="1"/>
        <end position="845"/>
    </location>
</feature>
<feature type="domain" description="mRNA cap 0 methyltransferase" evidence="3">
    <location>
        <begin position="561"/>
        <end position="845"/>
    </location>
</feature>
<feature type="region of interest" description="Triphosphatase-guanylyltransferase" evidence="1">
    <location>
        <begin position="1"/>
        <end position="539"/>
    </location>
</feature>
<feature type="active site" description="N6-GMP-lysine intermediate" evidence="2">
    <location>
        <position position="260"/>
    </location>
</feature>
<feature type="binding site" evidence="1 2">
    <location>
        <position position="37"/>
    </location>
    <ligand>
        <name>Mg(2+)</name>
        <dbReference type="ChEBI" id="CHEBI:18420"/>
        <note>catalytic; for RNA triphosphatase activity</note>
    </ligand>
</feature>
<feature type="binding site" evidence="1 2">
    <location>
        <position position="39"/>
    </location>
    <ligand>
        <name>Mg(2+)</name>
        <dbReference type="ChEBI" id="CHEBI:18420"/>
        <note>catalytic; for RNA triphosphatase activity</note>
    </ligand>
</feature>
<feature type="binding site" evidence="1 2">
    <location>
        <position position="192"/>
    </location>
    <ligand>
        <name>Mg(2+)</name>
        <dbReference type="ChEBI" id="CHEBI:18420"/>
        <note>catalytic; for RNA triphosphatase activity</note>
    </ligand>
</feature>
<feature type="binding site" evidence="1 2">
    <location>
        <position position="194"/>
    </location>
    <ligand>
        <name>Mg(2+)</name>
        <dbReference type="ChEBI" id="CHEBI:18420"/>
        <note>catalytic; for RNA triphosphatase activity</note>
    </ligand>
</feature>
<feature type="binding site" evidence="1">
    <location>
        <begin position="550"/>
        <end position="551"/>
    </location>
    <ligand>
        <name>S-adenosyl-L-methionine</name>
        <dbReference type="ChEBI" id="CHEBI:59789"/>
    </ligand>
</feature>
<feature type="binding site" evidence="3">
    <location>
        <begin position="570"/>
        <end position="571"/>
    </location>
    <ligand>
        <name>mRNA</name>
        <dbReference type="ChEBI" id="CHEBI:33699"/>
    </ligand>
    <ligandPart>
        <name>mRNA cap</name>
    </ligandPart>
</feature>
<feature type="binding site" evidence="3">
    <location>
        <position position="574"/>
    </location>
    <ligand>
        <name>S-adenosyl-L-methionine</name>
        <dbReference type="ChEBI" id="CHEBI:59789"/>
    </ligand>
</feature>
<feature type="binding site" evidence="3">
    <location>
        <position position="599"/>
    </location>
    <ligand>
        <name>S-adenosyl-L-methionine</name>
        <dbReference type="ChEBI" id="CHEBI:59789"/>
    </ligand>
</feature>
<feature type="binding site" evidence="3">
    <location>
        <position position="621"/>
    </location>
    <ligand>
        <name>S-adenosyl-L-methionine</name>
        <dbReference type="ChEBI" id="CHEBI:59789"/>
    </ligand>
</feature>
<feature type="binding site" evidence="3">
    <location>
        <begin position="679"/>
        <end position="681"/>
    </location>
    <ligand>
        <name>S-adenosyl-L-methionine</name>
        <dbReference type="ChEBI" id="CHEBI:59789"/>
    </ligand>
</feature>
<feature type="site" description="Essential for RNA triphosphatase activity" evidence="1">
    <location>
        <position position="77"/>
    </location>
</feature>
<feature type="site" description="Essential for RNA triphosphatase activity" evidence="1">
    <location>
        <position position="107"/>
    </location>
</feature>
<feature type="site" description="Essential for RNA triphosphatase activity" evidence="1">
    <location>
        <position position="126"/>
    </location>
</feature>
<feature type="site" description="Essential for RNA triphosphatase activity" evidence="1">
    <location>
        <position position="159"/>
    </location>
</feature>
<feature type="site" description="Essential for RNA triphosphatase activity" evidence="1">
    <location>
        <position position="161"/>
    </location>
</feature>
<feature type="site" description="mRNA cap binding" evidence="3">
    <location>
        <position position="608"/>
    </location>
</feature>
<feature type="site" description="mRNA cap binding" evidence="3">
    <location>
        <position position="633"/>
    </location>
</feature>
<feature type="site" description="mRNA cap binding" evidence="3">
    <location>
        <position position="683"/>
    </location>
</feature>
<feature type="site" description="mRNA cap binding" evidence="3">
    <location>
        <position position="764"/>
    </location>
</feature>
<feature type="site" description="mRNA cap binding" evidence="3">
    <location>
        <position position="837"/>
    </location>
</feature>
<name>MCEL_MONPV</name>
<sequence>MDANIVSSSTIATYIDALAKNASELEQRSTAYEINNELELVFIKPPLITLTNVVNISTIQESFIRFTVTNKEGIKIRTKIPLSKVHGLDVKNVQLVDAIDNIVWEKKSLVTENRLHKECLLRLSTEERHIFLDYKKYGSSIRLELVNLIQAKTKNFTIDFKLKYFLGSGAQSKSSLLHAINHPKSRPNTSLEIEFTPRDNETVPYDELIKELTTLSRHIFMASPENVILSPPINAPIKTFMLPKQDIVGLDLENLYAVTKTDGIPITIRVTSKGLYCYFTHLGYIIRYPVKRTIDSEVVVFGEAVKDKNWTVYLIKLIEPVNAISDRLEESKYVESKLVDICDRIVFKSKKYEGPFTTTSEVVDMLSTYLPKQPEGVILFYSKGPKSNIDFKIKKENTIDQTANVVFRYMSSEPIIFGESSIFIEYKKFTNDKGFPKEYGSGKIVLYNGVNYLNNIYCLEYINTHNEVGIKSVVVPIKFIAEFLVNGEILKPRIDKTMKYINSEDYYGNQHNIIVEHLRDQSIKIGDVFNEDKLSDVGHQYAANNDKFRLNPEVSYFTNKRTRGPLGILSNYVKTLLISMYCSKTFLDDSNKRKVLAIDFGNGADLEKYFYGEIALLVATDPDADAIARGNERYNKLNSGIKTKYYKFDYIQETIRSDTFVSSVREVFYFGKFNIIDWQFAIHYSFHPRHYATVMNNLSELTASGGKVLITTMDGDKLSKLTDKKTFIIHKNLPSSENYMSVEKIADDRIVVYNPSTMSTPMTEYIIKKNDIVRVFNEYGFVLVDNVDFATIIERSKKFINGASTMEDRPSTRNFFELNRGAIKCEGLDVEDLLSYYVVYVFSKR</sequence>
<gene>
    <name type="primary">OPG113</name>
    <name type="ORF">MPXVgp098</name>
</gene>
<proteinExistence type="evidence at protein level"/>
<protein>
    <recommendedName>
        <fullName>mRNA-capping enzyme catalytic subunit</fullName>
    </recommendedName>
    <alternativeName>
        <fullName>Virus termination factor large subunit</fullName>
        <shortName>VTF large subunit</shortName>
    </alternativeName>
    <alternativeName>
        <fullName>mRNA-capping enzyme 97 kDa subunit</fullName>
    </alternativeName>
    <alternativeName>
        <fullName>mRNA-capping enzyme D1 subunit</fullName>
    </alternativeName>
    <alternativeName>
        <fullName>mRNA-capping enzyme large subunit</fullName>
    </alternativeName>
    <domain>
        <recommendedName>
            <fullName>Polynucleotide 5'-triphosphatase</fullName>
            <ecNumber evidence="1">3.6.1.74</ecNumber>
        </recommendedName>
        <alternativeName>
            <fullName>mRNA 5'-triphosphatase</fullName>
            <shortName>TPase</shortName>
        </alternativeName>
    </domain>
    <domain>
        <recommendedName>
            <fullName>mRNA guanylyltransferase</fullName>
            <ecNumber evidence="1">2.7.7.50</ecNumber>
        </recommendedName>
        <alternativeName>
            <fullName>GTP--RNA guanylyltransferase</fullName>
            <shortName>GTase</shortName>
        </alternativeName>
    </domain>
    <domain>
        <recommendedName>
            <fullName>mRNA (guanine-N(7))-methyltransferase</fullName>
            <ecNumber evidence="1">2.1.1.56</ecNumber>
        </recommendedName>
        <alternativeName>
            <fullName>mRNA cap methyltransferase</fullName>
        </alternativeName>
    </domain>
</protein>
<organismHost>
    <name type="scientific">Cynomys gunnisoni</name>
    <name type="common">Gunnison's prairie dog</name>
    <name type="synonym">Spermophilus gunnisoni</name>
    <dbReference type="NCBI Taxonomy" id="45479"/>
</organismHost>
<organismHost>
    <name type="scientific">Cynomys leucurus</name>
    <name type="common">White-tailed prairie dog</name>
    <dbReference type="NCBI Taxonomy" id="99825"/>
</organismHost>
<organismHost>
    <name type="scientific">Cynomys ludovicianus</name>
    <name type="common">Black-tailed prairie dog</name>
    <dbReference type="NCBI Taxonomy" id="45480"/>
</organismHost>
<organismHost>
    <name type="scientific">Cynomys mexicanus</name>
    <name type="common">Mexican prairie dog</name>
    <dbReference type="NCBI Taxonomy" id="99826"/>
</organismHost>
<organismHost>
    <name type="scientific">Cynomys parvidens</name>
    <name type="common">Utah prairie dog</name>
    <dbReference type="NCBI Taxonomy" id="99827"/>
</organismHost>
<organismHost>
    <name type="scientific">Gliridae</name>
    <name type="common">dormice</name>
    <dbReference type="NCBI Taxonomy" id="30650"/>
</organismHost>
<organismHost>
    <name type="scientific">Heliosciurus ruwenzorii</name>
    <name type="common">Ruwenzori sun squirrel</name>
    <dbReference type="NCBI Taxonomy" id="226685"/>
</organismHost>
<organismHost>
    <name type="scientific">Homo sapiens</name>
    <name type="common">Human</name>
    <dbReference type="NCBI Taxonomy" id="9606"/>
</organismHost>
<organismHost>
    <name type="scientific">Mus musculus</name>
    <name type="common">Mouse</name>
    <dbReference type="NCBI Taxonomy" id="10090"/>
</organismHost>
<organism>
    <name type="scientific">Monkeypox virus</name>
    <dbReference type="NCBI Taxonomy" id="10244"/>
    <lineage>
        <taxon>Viruses</taxon>
        <taxon>Varidnaviria</taxon>
        <taxon>Bamfordvirae</taxon>
        <taxon>Nucleocytoviricota</taxon>
        <taxon>Pokkesviricetes</taxon>
        <taxon>Chitovirales</taxon>
        <taxon>Poxviridae</taxon>
        <taxon>Chordopoxvirinae</taxon>
        <taxon>Orthopoxvirus</taxon>
    </lineage>
</organism>
<keyword id="KW-0002">3D-structure</keyword>
<keyword id="KW-0378">Hydrolase</keyword>
<keyword id="KW-0460">Magnesium</keyword>
<keyword id="KW-0479">Metal-binding</keyword>
<keyword id="KW-0489">Methyltransferase</keyword>
<keyword id="KW-0511">Multifunctional enzyme</keyword>
<keyword id="KW-0548">Nucleotidyltransferase</keyword>
<keyword id="KW-1185">Reference proteome</keyword>
<keyword id="KW-0694">RNA-binding</keyword>
<keyword id="KW-0949">S-adenosyl-L-methionine</keyword>
<keyword id="KW-0808">Transferase</keyword>
<keyword id="KW-0946">Virion</keyword>
<dbReference type="EC" id="3.6.1.74" evidence="1"/>
<dbReference type="EC" id="2.7.7.50" evidence="1"/>
<dbReference type="EC" id="2.1.1.56" evidence="1"/>
<dbReference type="EMBL" id="MT903340">
    <property type="protein sequence ID" value="QNP12968.1"/>
    <property type="molecule type" value="Genomic_DNA"/>
</dbReference>
<dbReference type="RefSeq" id="YP_010377095.1">
    <property type="nucleotide sequence ID" value="NC_063383.1"/>
</dbReference>
<dbReference type="PDB" id="8Y2Z">
    <property type="method" value="X-ray"/>
    <property type="resolution" value="3.94 A"/>
    <property type="chains" value="A=546-845"/>
</dbReference>
<dbReference type="PDB" id="8ZE4">
    <property type="method" value="X-ray"/>
    <property type="resolution" value="3.33 A"/>
    <property type="chains" value="A=546-845"/>
</dbReference>
<dbReference type="PDBsum" id="8Y2Z"/>
<dbReference type="PDBsum" id="8ZE4"/>
<dbReference type="SMR" id="A0A7H0DN85"/>
<dbReference type="GeneID" id="72551508"/>
<dbReference type="Proteomes" id="UP000516359">
    <property type="component" value="Genome"/>
</dbReference>
<dbReference type="GO" id="GO:0044423">
    <property type="term" value="C:virion component"/>
    <property type="evidence" value="ECO:0007669"/>
    <property type="project" value="UniProtKB-KW"/>
</dbReference>
<dbReference type="GO" id="GO:0050355">
    <property type="term" value="F:inorganic triphosphate phosphatase activity"/>
    <property type="evidence" value="ECO:0007669"/>
    <property type="project" value="InterPro"/>
</dbReference>
<dbReference type="GO" id="GO:0046872">
    <property type="term" value="F:metal ion binding"/>
    <property type="evidence" value="ECO:0007669"/>
    <property type="project" value="UniProtKB-KW"/>
</dbReference>
<dbReference type="GO" id="GO:0004482">
    <property type="term" value="F:mRNA 5'-cap (guanine-N7-)-methyltransferase activity"/>
    <property type="evidence" value="ECO:0007669"/>
    <property type="project" value="InterPro"/>
</dbReference>
<dbReference type="GO" id="GO:0004484">
    <property type="term" value="F:mRNA guanylyltransferase activity"/>
    <property type="evidence" value="ECO:0007669"/>
    <property type="project" value="InterPro"/>
</dbReference>
<dbReference type="GO" id="GO:0004651">
    <property type="term" value="F:polynucleotide 5'-phosphatase activity"/>
    <property type="evidence" value="ECO:0007669"/>
    <property type="project" value="InterPro"/>
</dbReference>
<dbReference type="GO" id="GO:0003723">
    <property type="term" value="F:RNA binding"/>
    <property type="evidence" value="ECO:0007669"/>
    <property type="project" value="UniProtKB-KW"/>
</dbReference>
<dbReference type="FunFam" id="3.30.470.140:FF:000001">
    <property type="entry name" value="mRNA-capping enzyme catalytic subunit"/>
    <property type="match status" value="1"/>
</dbReference>
<dbReference type="FunFam" id="3.40.50.150:FF:000307">
    <property type="entry name" value="mRNA-capping enzyme catalytic subunit"/>
    <property type="match status" value="1"/>
</dbReference>
<dbReference type="Gene3D" id="2.40.50.830">
    <property type="match status" value="1"/>
</dbReference>
<dbReference type="Gene3D" id="3.20.100.20">
    <property type="match status" value="1"/>
</dbReference>
<dbReference type="Gene3D" id="3.30.470.140">
    <property type="match status" value="1"/>
</dbReference>
<dbReference type="Gene3D" id="3.40.50.150">
    <property type="entry name" value="Vaccinia Virus protein VP39"/>
    <property type="match status" value="1"/>
</dbReference>
<dbReference type="InterPro" id="IPR048425">
    <property type="entry name" value="MCEL_GT_NTPase"/>
</dbReference>
<dbReference type="InterPro" id="IPR048426">
    <property type="entry name" value="MCEL_GT_OB"/>
</dbReference>
<dbReference type="InterPro" id="IPR046429">
    <property type="entry name" value="MCEL_NTPase_sf"/>
</dbReference>
<dbReference type="InterPro" id="IPR046428">
    <property type="entry name" value="MCEL_OB_dom_sf"/>
</dbReference>
<dbReference type="InterPro" id="IPR019602">
    <property type="entry name" value="MCEL_TPase"/>
</dbReference>
<dbReference type="InterPro" id="IPR046430">
    <property type="entry name" value="MCEL_TPase_sf"/>
</dbReference>
<dbReference type="InterPro" id="IPR004971">
    <property type="entry name" value="mRNA_G-N7_MeTrfase_dom"/>
</dbReference>
<dbReference type="InterPro" id="IPR039753">
    <property type="entry name" value="RG7MT1"/>
</dbReference>
<dbReference type="InterPro" id="IPR029063">
    <property type="entry name" value="SAM-dependent_MTases_sf"/>
</dbReference>
<dbReference type="PANTHER" id="PTHR12189:SF2">
    <property type="entry name" value="MRNA CAP GUANINE-N7 METHYLTRANSFERASE"/>
    <property type="match status" value="1"/>
</dbReference>
<dbReference type="PANTHER" id="PTHR12189">
    <property type="entry name" value="MRNA GUANINE-7- METHYLTRANSFERASE"/>
    <property type="match status" value="1"/>
</dbReference>
<dbReference type="Pfam" id="PF21004">
    <property type="entry name" value="MCEL_GT_NTPase"/>
    <property type="match status" value="1"/>
</dbReference>
<dbReference type="Pfam" id="PF21005">
    <property type="entry name" value="MCEL_GT_OB"/>
    <property type="match status" value="1"/>
</dbReference>
<dbReference type="Pfam" id="PF10640">
    <property type="entry name" value="MCEL_TPase"/>
    <property type="match status" value="1"/>
</dbReference>
<dbReference type="Pfam" id="PF03291">
    <property type="entry name" value="mRNA_G-N7_MeTrfase"/>
    <property type="match status" value="1"/>
</dbReference>
<dbReference type="SUPFAM" id="SSF53335">
    <property type="entry name" value="S-adenosyl-L-methionine-dependent methyltransferases"/>
    <property type="match status" value="1"/>
</dbReference>
<dbReference type="PROSITE" id="PS51562">
    <property type="entry name" value="RNA_CAP0_MT"/>
    <property type="match status" value="1"/>
</dbReference>
<accession>A0A7H0DN85</accession>
<reference key="1">
    <citation type="journal article" date="2022" name="J. Infect. Dis.">
        <title>Exportation of Monkeypox virus from the African continent.</title>
        <authorList>
            <person name="Mauldin M.R."/>
            <person name="McCollum A.M."/>
            <person name="Nakazawa Y.J."/>
            <person name="Mandra A."/>
            <person name="Whitehouse E.R."/>
            <person name="Davidson W."/>
            <person name="Zhao H."/>
            <person name="Gao J."/>
            <person name="Li Y."/>
            <person name="Doty J."/>
            <person name="Yinka-Ogunleye A."/>
            <person name="Akinpelu A."/>
            <person name="Aruna O."/>
            <person name="Naidoo D."/>
            <person name="Lewandowski K."/>
            <person name="Afrough B."/>
            <person name="Graham V."/>
            <person name="Aarons E."/>
            <person name="Hewson R."/>
            <person name="Vipond R."/>
            <person name="Dunning J."/>
            <person name="Chand M."/>
            <person name="Brown C."/>
            <person name="Cohen-Gihon I."/>
            <person name="Erez N."/>
            <person name="Shifman O."/>
            <person name="Israeli O."/>
            <person name="Sharon M."/>
            <person name="Schwartz E."/>
            <person name="Beth-Din A."/>
            <person name="Zvi A."/>
            <person name="Mak T.M."/>
            <person name="Ng Y.K."/>
            <person name="Cui L."/>
            <person name="Lin R.T.P."/>
            <person name="Olson V.A."/>
            <person name="Brooks T."/>
            <person name="Paran N."/>
            <person name="Ihekweazu C."/>
            <person name="Reynolds M.G."/>
        </authorList>
    </citation>
    <scope>NUCLEOTIDE SEQUENCE [LARGE SCALE GENOMIC DNA]</scope>
    <source>
        <strain>MPXV-M5312_HM12_Rivers</strain>
    </source>
</reference>
<evidence type="ECO:0000250" key="1">
    <source>
        <dbReference type="UniProtKB" id="P04298"/>
    </source>
</evidence>
<evidence type="ECO:0000255" key="2"/>
<evidence type="ECO:0000255" key="3">
    <source>
        <dbReference type="PROSITE-ProRule" id="PRU00895"/>
    </source>
</evidence>
<evidence type="ECO:0000305" key="4"/>
<comment type="function">
    <text evidence="1">Catalytic subunit of the mRNA capping enzyme which catalyzes three enzymatic reactions: the 5' triphosphate end of the pre-mRNA is hydrolyzed to a diphosphate by RNA 5' triphosphatase; the diphosphate RNA end is capped with GMP by RNA guanylyltransferase and the GpppN cap is methylated by RNA (guanine-N7) methyltransferase. Heterodimeric mRNA capping enzyme catalyzes the linkage of a N7-methyl-guanosine moiety to the first transcribed nucleotide (cap 0 structure), whereas the methyltransferase OPG102 is responsible for a second methylation at the 2'-O position of the ribose (cap 1 structure). Also involved in early viral gene transcription termination and intermediate viral gene transcription initiation. Early gene transcription termination requires the termination factor VTF, the DNA-dependent ATPase NPH-I/OPG123 and the RAP94/OPG109 subunit of the viral RNA polymerase, as well as the presence of a specific termination motif. Binds, together with RAP94/OPG109, to the termination motif 5'-UUUUUNU-3' in the nascent early mRNA.</text>
</comment>
<comment type="catalytic activity">
    <reaction evidence="1">
        <text>a 5'-end triphospho-ribonucleoside in mRNA + H2O = a 5'-end diphospho-ribonucleoside in mRNA + phosphate + H(+)</text>
        <dbReference type="Rhea" id="RHEA:67004"/>
        <dbReference type="Rhea" id="RHEA-COMP:17164"/>
        <dbReference type="Rhea" id="RHEA-COMP:17165"/>
        <dbReference type="ChEBI" id="CHEBI:15377"/>
        <dbReference type="ChEBI" id="CHEBI:15378"/>
        <dbReference type="ChEBI" id="CHEBI:43474"/>
        <dbReference type="ChEBI" id="CHEBI:167616"/>
        <dbReference type="ChEBI" id="CHEBI:167618"/>
        <dbReference type="EC" id="3.6.1.74"/>
    </reaction>
</comment>
<comment type="catalytic activity">
    <reaction evidence="1">
        <text>a 5'-end diphospho-ribonucleoside in mRNA + GTP + H(+) = a 5'-end (5'-triphosphoguanosine)-ribonucleoside in mRNA + diphosphate</text>
        <dbReference type="Rhea" id="RHEA:67012"/>
        <dbReference type="Rhea" id="RHEA-COMP:17165"/>
        <dbReference type="Rhea" id="RHEA-COMP:17166"/>
        <dbReference type="ChEBI" id="CHEBI:15378"/>
        <dbReference type="ChEBI" id="CHEBI:33019"/>
        <dbReference type="ChEBI" id="CHEBI:37565"/>
        <dbReference type="ChEBI" id="CHEBI:167616"/>
        <dbReference type="ChEBI" id="CHEBI:167617"/>
        <dbReference type="EC" id="2.7.7.50"/>
    </reaction>
</comment>
<comment type="catalytic activity">
    <reaction evidence="1">
        <text>a 5'-end (5'-triphosphoguanosine)-ribonucleoside in mRNA + S-adenosyl-L-methionine = a 5'-end (N(7)-methyl 5'-triphosphoguanosine)-ribonucleoside in mRNA + S-adenosyl-L-homocysteine</text>
        <dbReference type="Rhea" id="RHEA:67008"/>
        <dbReference type="Rhea" id="RHEA-COMP:17166"/>
        <dbReference type="Rhea" id="RHEA-COMP:17167"/>
        <dbReference type="ChEBI" id="CHEBI:57856"/>
        <dbReference type="ChEBI" id="CHEBI:59789"/>
        <dbReference type="ChEBI" id="CHEBI:156461"/>
        <dbReference type="ChEBI" id="CHEBI:167617"/>
        <dbReference type="EC" id="2.1.1.56"/>
    </reaction>
</comment>
<comment type="cofactor">
    <cofactor evidence="1">
        <name>Mg(2+)</name>
        <dbReference type="ChEBI" id="CHEBI:18420"/>
    </cofactor>
</comment>
<comment type="subunit">
    <text evidence="1">Forms a heterodimer with the regulatory subunit OPG124.</text>
</comment>
<comment type="subcellular location">
    <subcellularLocation>
        <location evidence="1">Virion</location>
    </subcellularLocation>
    <text evidence="1">All the enzymes and other proteins required to synthesize early mRNAs are packaged within the virion core along with the DNA genome.</text>
</comment>
<comment type="domain">
    <text evidence="1">The N-terminus contains the triphosphatase and guanylyltransferase domains, whereas the C-terminus contains the methyltransferase domain. The N-terminus is involved in binding to the termination motif 5'-UUUUUNU-3' in the nascent mRNA.</text>
</comment>
<comment type="similarity">
    <text evidence="4">In the N-terminal section; belongs to the dsDNA virus mRNA guanylyltransferase family.</text>
</comment>
<comment type="similarity">
    <text evidence="3">In the C-terminal section; belongs to the class I-like SAM-binding methyltransferase superfamily. mRNA cap 0 methyltransferase family.</text>
</comment>